<accession>A5DQI5</accession>
<feature type="chain" id="PRO_0000406620" description="Enhancer of translation termination 1">
    <location>
        <begin position="1"/>
        <end position="418"/>
    </location>
</feature>
<feature type="region of interest" description="Disordered" evidence="2">
    <location>
        <begin position="1"/>
        <end position="36"/>
    </location>
</feature>
<feature type="region of interest" description="Disordered" evidence="2">
    <location>
        <begin position="222"/>
        <end position="241"/>
    </location>
</feature>
<feature type="compositionally biased region" description="Low complexity" evidence="2">
    <location>
        <begin position="1"/>
        <end position="11"/>
    </location>
</feature>
<feature type="compositionally biased region" description="Low complexity" evidence="2">
    <location>
        <begin position="21"/>
        <end position="30"/>
    </location>
</feature>
<feature type="compositionally biased region" description="Acidic residues" evidence="2">
    <location>
        <begin position="224"/>
        <end position="241"/>
    </location>
</feature>
<keyword id="KW-0539">Nucleus</keyword>
<keyword id="KW-1185">Reference proteome</keyword>
<keyword id="KW-0804">Transcription</keyword>
<keyword id="KW-0805">Transcription regulation</keyword>
<keyword id="KW-0810">Translation regulation</keyword>
<proteinExistence type="inferred from homology"/>
<gene>
    <name type="primary">ETT1</name>
    <name type="ORF">PGUG_05536</name>
</gene>
<name>ETT1_PICGU</name>
<organism>
    <name type="scientific">Meyerozyma guilliermondii (strain ATCC 6260 / CBS 566 / DSM 6381 / JCM 1539 / NBRC 10279 / NRRL Y-324)</name>
    <name type="common">Yeast</name>
    <name type="synonym">Candida guilliermondii</name>
    <dbReference type="NCBI Taxonomy" id="294746"/>
    <lineage>
        <taxon>Eukaryota</taxon>
        <taxon>Fungi</taxon>
        <taxon>Dikarya</taxon>
        <taxon>Ascomycota</taxon>
        <taxon>Saccharomycotina</taxon>
        <taxon>Pichiomycetes</taxon>
        <taxon>Debaryomycetaceae</taxon>
        <taxon>Meyerozyma</taxon>
    </lineage>
</organism>
<dbReference type="EMBL" id="CH408161">
    <property type="protein sequence ID" value="EDK41438.2"/>
    <property type="molecule type" value="Genomic_DNA"/>
</dbReference>
<dbReference type="RefSeq" id="XP_001482516.1">
    <property type="nucleotide sequence ID" value="XM_001482466.1"/>
</dbReference>
<dbReference type="SMR" id="A5DQI5"/>
<dbReference type="FunCoup" id="A5DQI5">
    <property type="interactions" value="98"/>
</dbReference>
<dbReference type="STRING" id="294746.A5DQI5"/>
<dbReference type="GeneID" id="5124180"/>
<dbReference type="KEGG" id="pgu:PGUG_05536"/>
<dbReference type="VEuPathDB" id="FungiDB:PGUG_05536"/>
<dbReference type="eggNOG" id="ENOG502QPHX">
    <property type="taxonomic scope" value="Eukaryota"/>
</dbReference>
<dbReference type="HOGENOM" id="CLU_050427_0_0_1"/>
<dbReference type="InParanoid" id="A5DQI5"/>
<dbReference type="OMA" id="GIVHECD"/>
<dbReference type="OrthoDB" id="5598057at2759"/>
<dbReference type="Proteomes" id="UP000001997">
    <property type="component" value="Unassembled WGS sequence"/>
</dbReference>
<dbReference type="GO" id="GO:0005634">
    <property type="term" value="C:nucleus"/>
    <property type="evidence" value="ECO:0007669"/>
    <property type="project" value="UniProtKB-SubCell"/>
</dbReference>
<dbReference type="GO" id="GO:2000640">
    <property type="term" value="P:positive regulation of SREBP signaling pathway"/>
    <property type="evidence" value="ECO:0007669"/>
    <property type="project" value="TreeGrafter"/>
</dbReference>
<dbReference type="GO" id="GO:0006417">
    <property type="term" value="P:regulation of translation"/>
    <property type="evidence" value="ECO:0007669"/>
    <property type="project" value="UniProtKB-KW"/>
</dbReference>
<dbReference type="Gene3D" id="1.25.40.10">
    <property type="entry name" value="Tetratricopeptide repeat domain"/>
    <property type="match status" value="1"/>
</dbReference>
<dbReference type="InterPro" id="IPR024318">
    <property type="entry name" value="Nro1/ETT1"/>
</dbReference>
<dbReference type="InterPro" id="IPR011990">
    <property type="entry name" value="TPR-like_helical_dom_sf"/>
</dbReference>
<dbReference type="PANTHER" id="PTHR28290">
    <property type="entry name" value="ENHANCER OF TRANSLATION TERMINATION 1"/>
    <property type="match status" value="1"/>
</dbReference>
<dbReference type="PANTHER" id="PTHR28290:SF1">
    <property type="entry name" value="ENHANCER OF TRANSLATION TERMINATION 1"/>
    <property type="match status" value="1"/>
</dbReference>
<dbReference type="Pfam" id="PF12753">
    <property type="entry name" value="Nro1"/>
    <property type="match status" value="1"/>
</dbReference>
<comment type="function">
    <text evidence="1">Required for correct translation termination and probably involved in regulation of hypoxic gene expression.</text>
</comment>
<comment type="subcellular location">
    <subcellularLocation>
        <location evidence="1">Nucleus</location>
    </subcellularLocation>
</comment>
<comment type="similarity">
    <text evidence="3">Belongs to the ETT1 family.</text>
</comment>
<evidence type="ECO:0000250" key="1"/>
<evidence type="ECO:0000256" key="2">
    <source>
        <dbReference type="SAM" id="MobiDB-lite"/>
    </source>
</evidence>
<evidence type="ECO:0000305" key="3"/>
<reference key="1">
    <citation type="journal article" date="2009" name="Nature">
        <title>Evolution of pathogenicity and sexual reproduction in eight Candida genomes.</title>
        <authorList>
            <person name="Butler G."/>
            <person name="Rasmussen M.D."/>
            <person name="Lin M.F."/>
            <person name="Santos M.A.S."/>
            <person name="Sakthikumar S."/>
            <person name="Munro C.A."/>
            <person name="Rheinbay E."/>
            <person name="Grabherr M."/>
            <person name="Forche A."/>
            <person name="Reedy J.L."/>
            <person name="Agrafioti I."/>
            <person name="Arnaud M.B."/>
            <person name="Bates S."/>
            <person name="Brown A.J.P."/>
            <person name="Brunke S."/>
            <person name="Costanzo M.C."/>
            <person name="Fitzpatrick D.A."/>
            <person name="de Groot P.W.J."/>
            <person name="Harris D."/>
            <person name="Hoyer L.L."/>
            <person name="Hube B."/>
            <person name="Klis F.M."/>
            <person name="Kodira C."/>
            <person name="Lennard N."/>
            <person name="Logue M.E."/>
            <person name="Martin R."/>
            <person name="Neiman A.M."/>
            <person name="Nikolaou E."/>
            <person name="Quail M.A."/>
            <person name="Quinn J."/>
            <person name="Santos M.C."/>
            <person name="Schmitzberger F.F."/>
            <person name="Sherlock G."/>
            <person name="Shah P."/>
            <person name="Silverstein K.A.T."/>
            <person name="Skrzypek M.S."/>
            <person name="Soll D."/>
            <person name="Staggs R."/>
            <person name="Stansfield I."/>
            <person name="Stumpf M.P.H."/>
            <person name="Sudbery P.E."/>
            <person name="Srikantha T."/>
            <person name="Zeng Q."/>
            <person name="Berman J."/>
            <person name="Berriman M."/>
            <person name="Heitman J."/>
            <person name="Gow N.A.R."/>
            <person name="Lorenz M.C."/>
            <person name="Birren B.W."/>
            <person name="Kellis M."/>
            <person name="Cuomo C.A."/>
        </authorList>
    </citation>
    <scope>NUCLEOTIDE SEQUENCE [LARGE SCALE GENOMIC DNA]</scope>
    <source>
        <strain>ATCC 6260 / CBS 566 / DSM 6381 / JCM 1539 / NBRC 10279 / NRRL Y-324</strain>
    </source>
</reference>
<sequence>MAKRQLGLGKAAKAKKQKTETSQSTAATSQKPNETLRVELNEEADADDELAQLQALWNTYSKSDKENELMVNGIIHECDRLLRNWDEKNEALPDYFHAIYALALSELAKYKPEETSQCFQMALERLDAGLAAYPKSIDVNFAKSRVLLARIPLQYISTLEVSSQVGDYPNVSEMLDEALSVYEVAETEAEARKEYSKFNEDNLDILQALDDVLDMMDNFCKKEEEEDEEKEDDDDEEEDEEEEVIQLAENHPLYHIQATDKYNFWWRNHTLKFLTNVTKRTENTTQLQRELCTRLGQSYLQEAEVPANVYTTLKYDDDYAGLGELQGLQMEEGQKLAQESFKEALKYLKKAQDDDDPDTWVNVAEAMISLGNMYEMDSPDQEKWYDEAEKILVRANKATQGKYREILENLRGEDEGDE</sequence>
<protein>
    <recommendedName>
        <fullName>Enhancer of translation termination 1</fullName>
    </recommendedName>
</protein>